<organism>
    <name type="scientific">Drosophila mauritiana</name>
    <name type="common">Fruit fly</name>
    <dbReference type="NCBI Taxonomy" id="7226"/>
    <lineage>
        <taxon>Eukaryota</taxon>
        <taxon>Metazoa</taxon>
        <taxon>Ecdysozoa</taxon>
        <taxon>Arthropoda</taxon>
        <taxon>Hexapoda</taxon>
        <taxon>Insecta</taxon>
        <taxon>Pterygota</taxon>
        <taxon>Neoptera</taxon>
        <taxon>Endopterygota</taxon>
        <taxon>Diptera</taxon>
        <taxon>Brachycera</taxon>
        <taxon>Muscomorpha</taxon>
        <taxon>Ephydroidea</taxon>
        <taxon>Drosophilidae</taxon>
        <taxon>Drosophila</taxon>
        <taxon>Sophophora</taxon>
    </lineage>
</organism>
<keyword id="KW-0044">Antibiotic</keyword>
<keyword id="KW-0929">Antimicrobial</keyword>
<keyword id="KW-0391">Immunity</keyword>
<keyword id="KW-0399">Innate immunity</keyword>
<keyword id="KW-0964">Secreted</keyword>
<keyword id="KW-0732">Signal</keyword>
<proteinExistence type="evidence at transcript level"/>
<gene>
    <name type="primary">Anp</name>
</gene>
<dbReference type="EMBL" id="AB047041">
    <property type="protein sequence ID" value="BAB78546.1"/>
    <property type="molecule type" value="Genomic_DNA"/>
</dbReference>
<dbReference type="EMBL" id="AF018993">
    <property type="protein sequence ID" value="AAB82490.1"/>
    <property type="molecule type" value="Genomic_DNA"/>
</dbReference>
<dbReference type="EMBL" id="Y16863">
    <property type="protein sequence ID" value="CAA76487.1"/>
    <property type="molecule type" value="Genomic_DNA"/>
</dbReference>
<dbReference type="SMR" id="O16825"/>
<dbReference type="EnsemblMetazoa" id="XM_033306183.1">
    <property type="protein sequence ID" value="XP_033162074.1"/>
    <property type="gene ID" value="LOC117142296"/>
</dbReference>
<dbReference type="Proteomes" id="UP000515162">
    <property type="component" value="Unplaced"/>
</dbReference>
<dbReference type="GO" id="GO:0005576">
    <property type="term" value="C:extracellular region"/>
    <property type="evidence" value="ECO:0000250"/>
    <property type="project" value="UniProtKB"/>
</dbReference>
<dbReference type="GO" id="GO:0050830">
    <property type="term" value="P:defense response to Gram-positive bacterium"/>
    <property type="evidence" value="ECO:0000250"/>
    <property type="project" value="UniProtKB"/>
</dbReference>
<dbReference type="GO" id="GO:0045087">
    <property type="term" value="P:innate immune response"/>
    <property type="evidence" value="ECO:0007669"/>
    <property type="project" value="UniProtKB-KW"/>
</dbReference>
<dbReference type="GO" id="GO:0006962">
    <property type="term" value="P:male-specific antibacterial humoral response"/>
    <property type="evidence" value="ECO:0000250"/>
    <property type="project" value="UniProtKB"/>
</dbReference>
<dbReference type="InterPro" id="IPR000875">
    <property type="entry name" value="Cecropin"/>
</dbReference>
<dbReference type="Pfam" id="PF00272">
    <property type="entry name" value="Cecropin"/>
    <property type="match status" value="1"/>
</dbReference>
<reference key="1">
    <citation type="journal article" date="2002" name="J. Mol. Evol.">
        <title>Rapid evolution of the male-specific antibacterial protein andropin gene in Drosophila.</title>
        <authorList>
            <person name="Date-Ito A."/>
            <person name="Kasahara K."/>
            <person name="Sawai H."/>
            <person name="Chigusa S.I."/>
        </authorList>
    </citation>
    <scope>NUCLEOTIDE SEQUENCE [GENOMIC DNA]</scope>
</reference>
<reference key="2">
    <citation type="journal article" date="1997" name="Genetics">
        <title>Molecular population genetics of Drosophila immune system genes.</title>
        <authorList>
            <person name="Clark A.G."/>
            <person name="Wang L."/>
        </authorList>
    </citation>
    <scope>NUCLEOTIDE SEQUENCE [GENOMIC DNA] OF 1-44</scope>
    <source>
        <strain>M31</strain>
    </source>
</reference>
<reference key="3">
    <citation type="journal article" date="1998" name="Genetics">
        <title>Molecular evolution of the Cecropin multigene family in Drosophila: functional genes vs pseudogenes.</title>
        <authorList>
            <person name="Ramos-Onsins S."/>
            <person name="Aguade M."/>
        </authorList>
    </citation>
    <scope>NUCLEOTIDE SEQUENCE [GENOMIC DNA] OF 43-57</scope>
    <source>
        <strain>Montemayor</strain>
    </source>
</reference>
<evidence type="ECO:0000255" key="1"/>
<evidence type="ECO:0000305" key="2"/>
<feature type="signal peptide" evidence="1">
    <location>
        <begin position="1"/>
        <end position="23"/>
    </location>
</feature>
<feature type="chain" id="PRO_0000004951" description="Andropin">
    <location>
        <begin position="24"/>
        <end position="57"/>
    </location>
</feature>
<name>ANDP_DROMA</name>
<accession>O16825</accession>
<accession>Q8WSV3</accession>
<protein>
    <recommendedName>
        <fullName>Andropin</fullName>
    </recommendedName>
</protein>
<comment type="function">
    <text>Male-specific peptide with moderate activity against Gram-positive bacteria.</text>
</comment>
<comment type="subcellular location">
    <subcellularLocation>
        <location>Secreted</location>
    </subcellularLocation>
</comment>
<comment type="tissue specificity">
    <text>Ejaculatory duct of adult males.</text>
</comment>
<comment type="induction">
    <text>In response to mating.</text>
</comment>
<comment type="similarity">
    <text evidence="2">Belongs to the andropin family.</text>
</comment>
<sequence>MKYFVVLVVLALILAITVGPSDAVFIDILDKMENAIHKAAQAGIGIAKPIEKMILPK</sequence>